<keyword id="KW-1185">Reference proteome</keyword>
<feature type="chain" id="PRO_1000149867" description="UPF0284 protein cce_1085">
    <location>
        <begin position="1"/>
        <end position="369"/>
    </location>
</feature>
<comment type="similarity">
    <text evidence="1">Belongs to the UPF0284 family.</text>
</comment>
<proteinExistence type="inferred from homology"/>
<name>Y1085_CROS5</name>
<organism>
    <name type="scientific">Crocosphaera subtropica (strain ATCC 51142 / BH68)</name>
    <name type="common">Cyanothece sp. (strain ATCC 51142)</name>
    <dbReference type="NCBI Taxonomy" id="43989"/>
    <lineage>
        <taxon>Bacteria</taxon>
        <taxon>Bacillati</taxon>
        <taxon>Cyanobacteriota</taxon>
        <taxon>Cyanophyceae</taxon>
        <taxon>Oscillatoriophycideae</taxon>
        <taxon>Chroococcales</taxon>
        <taxon>Aphanothecaceae</taxon>
        <taxon>Crocosphaera</taxon>
        <taxon>Crocosphaera subtropica</taxon>
    </lineage>
</organism>
<evidence type="ECO:0000255" key="1">
    <source>
        <dbReference type="HAMAP-Rule" id="MF_01086"/>
    </source>
</evidence>
<gene>
    <name type="ordered locus">cce_1085</name>
</gene>
<accession>B1WTW9</accession>
<protein>
    <recommendedName>
        <fullName evidence="1">UPF0284 protein cce_1085</fullName>
    </recommendedName>
</protein>
<dbReference type="EMBL" id="CP000806">
    <property type="protein sequence ID" value="ACB50435.1"/>
    <property type="molecule type" value="Genomic_DNA"/>
</dbReference>
<dbReference type="RefSeq" id="WP_009547019.1">
    <property type="nucleotide sequence ID" value="NC_010546.1"/>
</dbReference>
<dbReference type="SMR" id="B1WTW9"/>
<dbReference type="STRING" id="43989.cce_1085"/>
<dbReference type="KEGG" id="cyt:cce_1085"/>
<dbReference type="eggNOG" id="COG2038">
    <property type="taxonomic scope" value="Bacteria"/>
</dbReference>
<dbReference type="HOGENOM" id="CLU_053134_1_0_3"/>
<dbReference type="OrthoDB" id="418257at2"/>
<dbReference type="Proteomes" id="UP000001203">
    <property type="component" value="Chromosome circular"/>
</dbReference>
<dbReference type="GO" id="GO:0008939">
    <property type="term" value="F:nicotinate-nucleotide-dimethylbenzimidazole phosphoribosyltransferase activity"/>
    <property type="evidence" value="ECO:0007669"/>
    <property type="project" value="InterPro"/>
</dbReference>
<dbReference type="CDD" id="cd02439">
    <property type="entry name" value="DMB-PRT_CobT"/>
    <property type="match status" value="1"/>
</dbReference>
<dbReference type="Gene3D" id="3.40.50.10210">
    <property type="match status" value="1"/>
</dbReference>
<dbReference type="HAMAP" id="MF_01086">
    <property type="entry name" value="UPF0284"/>
    <property type="match status" value="1"/>
</dbReference>
<dbReference type="InterPro" id="IPR003200">
    <property type="entry name" value="Nict_dMeBzImd_PRibTrfase"/>
</dbReference>
<dbReference type="InterPro" id="IPR002805">
    <property type="entry name" value="Nict_dMeBzImd_PRibTrfase_arc"/>
</dbReference>
<dbReference type="InterPro" id="IPR036087">
    <property type="entry name" value="Nict_dMeBzImd_PRibTrfase_sf"/>
</dbReference>
<dbReference type="NCBIfam" id="TIGR00303">
    <property type="entry name" value="nicotinate mononucleotide-dependent phosphoribosyltransferase CobT"/>
    <property type="match status" value="1"/>
</dbReference>
<dbReference type="NCBIfam" id="NF003373">
    <property type="entry name" value="PRK04447.1-6"/>
    <property type="match status" value="1"/>
</dbReference>
<dbReference type="PANTHER" id="PTHR38811">
    <property type="match status" value="1"/>
</dbReference>
<dbReference type="PANTHER" id="PTHR38811:SF1">
    <property type="entry name" value="UPF0284 PROTEIN SLL1500"/>
    <property type="match status" value="1"/>
</dbReference>
<dbReference type="SUPFAM" id="SSF52733">
    <property type="entry name" value="Nicotinate mononucleotide:5,6-dimethylbenzimidazole phosphoribosyltransferase (CobT)"/>
    <property type="match status" value="1"/>
</dbReference>
<reference key="1">
    <citation type="journal article" date="2008" name="Proc. Natl. Acad. Sci. U.S.A.">
        <title>The genome of Cyanothece 51142, a unicellular diazotrophic cyanobacterium important in the marine nitrogen cycle.</title>
        <authorList>
            <person name="Welsh E.A."/>
            <person name="Liberton M."/>
            <person name="Stoeckel J."/>
            <person name="Loh T."/>
            <person name="Elvitigala T."/>
            <person name="Wang C."/>
            <person name="Wollam A."/>
            <person name="Fulton R.S."/>
            <person name="Clifton S.W."/>
            <person name="Jacobs J.M."/>
            <person name="Aurora R."/>
            <person name="Ghosh B.K."/>
            <person name="Sherman L.A."/>
            <person name="Smith R.D."/>
            <person name="Wilson R.K."/>
            <person name="Pakrasi H.B."/>
        </authorList>
    </citation>
    <scope>NUCLEOTIDE SEQUENCE [LARGE SCALE GENOMIC DNA]</scope>
    <source>
        <strain>ATCC 51142 / BH68</strain>
    </source>
</reference>
<sequence length="369" mass="39879">MFRIYTAHSLGQKWVENYQECSAIFACIVGFTETGLIPGISAAGATPEARKYTAIADAEFLINGVQSSYHYPLPPLSQGVSPVFITRAVVEACNIPIYLFNAGLPTPPSVPYIDLKGKSANCLTTGKALPLPLVYELFQQGLKWGKKLAKDHTKNYLILSECVVGGTTTALSILTGLGINATEKVNSSHPHCNHKQKELIVKEGFKNAGYSYNLKPINPFELVAAVGDPMQIVVAGMAISASLKTGVMLAGGTQMLAVYALIKSIINTSKYQGNLDNIIVGTTRWVAEDLTGDTVTLAESIGTVPLFATQLNFSSSSYQQLQMYEQGYVKEGVGAGGCAIAASLSYNWTQEKLLNRIENLVNNYHRIRN</sequence>